<feature type="chain" id="PRO_0000234758" description="Tyrosine--tRNA ligase">
    <location>
        <begin position="1"/>
        <end position="418"/>
    </location>
</feature>
<feature type="domain" description="S4 RNA-binding" evidence="1">
    <location>
        <begin position="350"/>
        <end position="418"/>
    </location>
</feature>
<feature type="short sequence motif" description="'HIGH' region">
    <location>
        <begin position="44"/>
        <end position="53"/>
    </location>
</feature>
<feature type="short sequence motif" description="'KMSKS' region">
    <location>
        <begin position="236"/>
        <end position="240"/>
    </location>
</feature>
<feature type="binding site" evidence="1">
    <location>
        <position position="39"/>
    </location>
    <ligand>
        <name>L-tyrosine</name>
        <dbReference type="ChEBI" id="CHEBI:58315"/>
    </ligand>
</feature>
<feature type="binding site" evidence="1">
    <location>
        <position position="176"/>
    </location>
    <ligand>
        <name>L-tyrosine</name>
        <dbReference type="ChEBI" id="CHEBI:58315"/>
    </ligand>
</feature>
<feature type="binding site" evidence="1">
    <location>
        <position position="180"/>
    </location>
    <ligand>
        <name>L-tyrosine</name>
        <dbReference type="ChEBI" id="CHEBI:58315"/>
    </ligand>
</feature>
<feature type="binding site" evidence="1">
    <location>
        <position position="239"/>
    </location>
    <ligand>
        <name>ATP</name>
        <dbReference type="ChEBI" id="CHEBI:30616"/>
    </ligand>
</feature>
<evidence type="ECO:0000255" key="1">
    <source>
        <dbReference type="HAMAP-Rule" id="MF_02006"/>
    </source>
</evidence>
<protein>
    <recommendedName>
        <fullName evidence="1">Tyrosine--tRNA ligase</fullName>
        <ecNumber evidence="1">6.1.1.1</ecNumber>
    </recommendedName>
    <alternativeName>
        <fullName evidence="1">Tyrosyl-tRNA synthetase</fullName>
        <shortName evidence="1">TyrRS</shortName>
    </alternativeName>
</protein>
<proteinExistence type="inferred from homology"/>
<gene>
    <name evidence="1" type="primary">tyrS</name>
    <name type="ordered locus">RPA2460</name>
</gene>
<organism>
    <name type="scientific">Rhodopseudomonas palustris (strain ATCC BAA-98 / CGA009)</name>
    <dbReference type="NCBI Taxonomy" id="258594"/>
    <lineage>
        <taxon>Bacteria</taxon>
        <taxon>Pseudomonadati</taxon>
        <taxon>Pseudomonadota</taxon>
        <taxon>Alphaproteobacteria</taxon>
        <taxon>Hyphomicrobiales</taxon>
        <taxon>Nitrobacteraceae</taxon>
        <taxon>Rhodopseudomonas</taxon>
    </lineage>
</organism>
<accession>Q6N703</accession>
<comment type="function">
    <text evidence="1">Catalyzes the attachment of tyrosine to tRNA(Tyr) in a two-step reaction: tyrosine is first activated by ATP to form Tyr-AMP and then transferred to the acceptor end of tRNA(Tyr).</text>
</comment>
<comment type="catalytic activity">
    <reaction evidence="1">
        <text>tRNA(Tyr) + L-tyrosine + ATP = L-tyrosyl-tRNA(Tyr) + AMP + diphosphate + H(+)</text>
        <dbReference type="Rhea" id="RHEA:10220"/>
        <dbReference type="Rhea" id="RHEA-COMP:9706"/>
        <dbReference type="Rhea" id="RHEA-COMP:9707"/>
        <dbReference type="ChEBI" id="CHEBI:15378"/>
        <dbReference type="ChEBI" id="CHEBI:30616"/>
        <dbReference type="ChEBI" id="CHEBI:33019"/>
        <dbReference type="ChEBI" id="CHEBI:58315"/>
        <dbReference type="ChEBI" id="CHEBI:78442"/>
        <dbReference type="ChEBI" id="CHEBI:78536"/>
        <dbReference type="ChEBI" id="CHEBI:456215"/>
        <dbReference type="EC" id="6.1.1.1"/>
    </reaction>
</comment>
<comment type="subunit">
    <text evidence="1">Homodimer.</text>
</comment>
<comment type="subcellular location">
    <subcellularLocation>
        <location evidence="1">Cytoplasm</location>
    </subcellularLocation>
</comment>
<comment type="similarity">
    <text evidence="1">Belongs to the class-I aminoacyl-tRNA synthetase family. TyrS type 1 subfamily.</text>
</comment>
<dbReference type="EC" id="6.1.1.1" evidence="1"/>
<dbReference type="EMBL" id="BX572601">
    <property type="protein sequence ID" value="CAE27901.1"/>
    <property type="molecule type" value="Genomic_DNA"/>
</dbReference>
<dbReference type="RefSeq" id="WP_011158010.1">
    <property type="nucleotide sequence ID" value="NZ_CP116810.1"/>
</dbReference>
<dbReference type="SMR" id="Q6N703"/>
<dbReference type="STRING" id="258594.RPA2460"/>
<dbReference type="GeneID" id="66893523"/>
<dbReference type="eggNOG" id="COG0162">
    <property type="taxonomic scope" value="Bacteria"/>
</dbReference>
<dbReference type="HOGENOM" id="CLU_024003_0_3_5"/>
<dbReference type="PhylomeDB" id="Q6N703"/>
<dbReference type="GO" id="GO:0005829">
    <property type="term" value="C:cytosol"/>
    <property type="evidence" value="ECO:0007669"/>
    <property type="project" value="TreeGrafter"/>
</dbReference>
<dbReference type="GO" id="GO:0005524">
    <property type="term" value="F:ATP binding"/>
    <property type="evidence" value="ECO:0007669"/>
    <property type="project" value="UniProtKB-UniRule"/>
</dbReference>
<dbReference type="GO" id="GO:0003723">
    <property type="term" value="F:RNA binding"/>
    <property type="evidence" value="ECO:0007669"/>
    <property type="project" value="UniProtKB-KW"/>
</dbReference>
<dbReference type="GO" id="GO:0004831">
    <property type="term" value="F:tyrosine-tRNA ligase activity"/>
    <property type="evidence" value="ECO:0007669"/>
    <property type="project" value="UniProtKB-UniRule"/>
</dbReference>
<dbReference type="GO" id="GO:0006437">
    <property type="term" value="P:tyrosyl-tRNA aminoacylation"/>
    <property type="evidence" value="ECO:0007669"/>
    <property type="project" value="UniProtKB-UniRule"/>
</dbReference>
<dbReference type="CDD" id="cd00165">
    <property type="entry name" value="S4"/>
    <property type="match status" value="1"/>
</dbReference>
<dbReference type="CDD" id="cd00805">
    <property type="entry name" value="TyrRS_core"/>
    <property type="match status" value="1"/>
</dbReference>
<dbReference type="FunFam" id="1.10.240.10:FF:000001">
    <property type="entry name" value="Tyrosine--tRNA ligase"/>
    <property type="match status" value="1"/>
</dbReference>
<dbReference type="FunFam" id="3.40.50.620:FF:000008">
    <property type="entry name" value="Tyrosine--tRNA ligase"/>
    <property type="match status" value="1"/>
</dbReference>
<dbReference type="Gene3D" id="3.40.50.620">
    <property type="entry name" value="HUPs"/>
    <property type="match status" value="1"/>
</dbReference>
<dbReference type="Gene3D" id="3.10.290.10">
    <property type="entry name" value="RNA-binding S4 domain"/>
    <property type="match status" value="1"/>
</dbReference>
<dbReference type="Gene3D" id="1.10.240.10">
    <property type="entry name" value="Tyrosyl-Transfer RNA Synthetase"/>
    <property type="match status" value="1"/>
</dbReference>
<dbReference type="HAMAP" id="MF_02006">
    <property type="entry name" value="Tyr_tRNA_synth_type1"/>
    <property type="match status" value="1"/>
</dbReference>
<dbReference type="InterPro" id="IPR002305">
    <property type="entry name" value="aa-tRNA-synth_Ic"/>
</dbReference>
<dbReference type="InterPro" id="IPR014729">
    <property type="entry name" value="Rossmann-like_a/b/a_fold"/>
</dbReference>
<dbReference type="InterPro" id="IPR036986">
    <property type="entry name" value="S4_RNA-bd_sf"/>
</dbReference>
<dbReference type="InterPro" id="IPR054608">
    <property type="entry name" value="SYY-like_C"/>
</dbReference>
<dbReference type="InterPro" id="IPR002307">
    <property type="entry name" value="Tyr-tRNA-ligase"/>
</dbReference>
<dbReference type="InterPro" id="IPR024088">
    <property type="entry name" value="Tyr-tRNA-ligase_bac-type"/>
</dbReference>
<dbReference type="InterPro" id="IPR024107">
    <property type="entry name" value="Tyr-tRNA-ligase_bac_1"/>
</dbReference>
<dbReference type="NCBIfam" id="TIGR00234">
    <property type="entry name" value="tyrS"/>
    <property type="match status" value="1"/>
</dbReference>
<dbReference type="PANTHER" id="PTHR11766:SF0">
    <property type="entry name" value="TYROSINE--TRNA LIGASE, MITOCHONDRIAL"/>
    <property type="match status" value="1"/>
</dbReference>
<dbReference type="PANTHER" id="PTHR11766">
    <property type="entry name" value="TYROSYL-TRNA SYNTHETASE"/>
    <property type="match status" value="1"/>
</dbReference>
<dbReference type="Pfam" id="PF22421">
    <property type="entry name" value="SYY_C-terminal"/>
    <property type="match status" value="1"/>
</dbReference>
<dbReference type="Pfam" id="PF00579">
    <property type="entry name" value="tRNA-synt_1b"/>
    <property type="match status" value="1"/>
</dbReference>
<dbReference type="PRINTS" id="PR01040">
    <property type="entry name" value="TRNASYNTHTYR"/>
</dbReference>
<dbReference type="SUPFAM" id="SSF55174">
    <property type="entry name" value="Alpha-L RNA-binding motif"/>
    <property type="match status" value="1"/>
</dbReference>
<dbReference type="SUPFAM" id="SSF52374">
    <property type="entry name" value="Nucleotidylyl transferase"/>
    <property type="match status" value="1"/>
</dbReference>
<dbReference type="PROSITE" id="PS50889">
    <property type="entry name" value="S4"/>
    <property type="match status" value="1"/>
</dbReference>
<keyword id="KW-0030">Aminoacyl-tRNA synthetase</keyword>
<keyword id="KW-0067">ATP-binding</keyword>
<keyword id="KW-0963">Cytoplasm</keyword>
<keyword id="KW-0436">Ligase</keyword>
<keyword id="KW-0547">Nucleotide-binding</keyword>
<keyword id="KW-0648">Protein biosynthesis</keyword>
<keyword id="KW-0694">RNA-binding</keyword>
<sequence>MTAFKSDFMNVLQSRGFIHQISDPDSLDALAAKGEVVAYVGYDCTAASLHVGHLLSIMMLHWLQATGNKPIALMGGGTTRVGDPSGRDETRKILTYEQIDANKESIKGTFSKFIKFGDGHSDALMADNAEWLTKLNYIEMLREIGRHFSINRMLTMDSVKLRLDREQELSFIEFNYMILQSYDFVELARRYKCNLQMGGSDQWGNIVTGVDLGRRMGTHQLHALTCPLLTTASGAKMGKTAAGAVWLNGDMLAPYDYWQYWRNTEDADVGRFLKLFTLLPMDEIERLSKLQGAEINDAKKILATEATALMHGREAADKAETTARTTFEQGGTAQDLPSVEISRGELDAGIGVLVAFAEKTGLVASNGEARRQIKAGGLKVNDAPVTDEKMTLTATDLSSDGVIKLSMGKKKHVLLRLA</sequence>
<name>SYY_RHOPA</name>
<reference key="1">
    <citation type="journal article" date="2004" name="Nat. Biotechnol.">
        <title>Complete genome sequence of the metabolically versatile photosynthetic bacterium Rhodopseudomonas palustris.</title>
        <authorList>
            <person name="Larimer F.W."/>
            <person name="Chain P."/>
            <person name="Hauser L."/>
            <person name="Lamerdin J.E."/>
            <person name="Malfatti S."/>
            <person name="Do L."/>
            <person name="Land M.L."/>
            <person name="Pelletier D.A."/>
            <person name="Beatty J.T."/>
            <person name="Lang A.S."/>
            <person name="Tabita F.R."/>
            <person name="Gibson J.L."/>
            <person name="Hanson T.E."/>
            <person name="Bobst C."/>
            <person name="Torres y Torres J.L."/>
            <person name="Peres C."/>
            <person name="Harrison F.H."/>
            <person name="Gibson J."/>
            <person name="Harwood C.S."/>
        </authorList>
    </citation>
    <scope>NUCLEOTIDE SEQUENCE [LARGE SCALE GENOMIC DNA]</scope>
    <source>
        <strain>ATCC BAA-98 / CGA009</strain>
    </source>
</reference>